<name>RR8_OLIPU</name>
<comment type="function">
    <text evidence="1">One of the primary rRNA binding proteins, it binds directly to 16S rRNA central domain where it helps coordinate assembly of the platform of the 30S subunit.</text>
</comment>
<comment type="subunit">
    <text evidence="1">Part of the 30S ribosomal subunit.</text>
</comment>
<comment type="subcellular location">
    <subcellularLocation>
        <location>Plastid</location>
        <location>Chloroplast</location>
    </subcellularLocation>
</comment>
<comment type="similarity">
    <text evidence="2">Belongs to the universal ribosomal protein uS8 family.</text>
</comment>
<feature type="chain" id="PRO_0000290987" description="Small ribosomal subunit protein uS8c">
    <location>
        <begin position="1"/>
        <end position="134"/>
    </location>
</feature>
<evidence type="ECO:0000250" key="1"/>
<evidence type="ECO:0000305" key="2"/>
<gene>
    <name type="primary">rps8</name>
</gene>
<accession>A4QJW6</accession>
<geneLocation type="chloroplast"/>
<sequence length="134" mass="15452">MGKDTIADIITSIRNADMNRKGTVRIGSTNITESIVKILLREGFIENVRKHRESNQYFLILTLRHRRNKKESYKTILNLKRISRPGLRIYSNSQRIPRILGGIGIVILSTSQGIMTDREARLKRIGGEILCYIW</sequence>
<keyword id="KW-0150">Chloroplast</keyword>
<keyword id="KW-0934">Plastid</keyword>
<keyword id="KW-0687">Ribonucleoprotein</keyword>
<keyword id="KW-0689">Ribosomal protein</keyword>
<keyword id="KW-0694">RNA-binding</keyword>
<keyword id="KW-0699">rRNA-binding</keyword>
<proteinExistence type="inferred from homology"/>
<reference key="1">
    <citation type="submission" date="2007-03" db="EMBL/GenBank/DDBJ databases">
        <title>Sequence analysis of Arabidopsis pumila JS2 chloroplast DNA.</title>
        <authorList>
            <person name="Hosouchi T."/>
            <person name="Tsuruoka H."/>
            <person name="Kotani H."/>
        </authorList>
    </citation>
    <scope>NUCLEOTIDE SEQUENCE [LARGE SCALE GENOMIC DNA]</scope>
</reference>
<dbReference type="EMBL" id="AP009368">
    <property type="protein sequence ID" value="BAF49974.1"/>
    <property type="molecule type" value="Genomic_DNA"/>
</dbReference>
<dbReference type="RefSeq" id="YP_001123150.1">
    <property type="nucleotide sequence ID" value="NC_009267.1"/>
</dbReference>
<dbReference type="SMR" id="A4QJW6"/>
<dbReference type="GeneID" id="4962400"/>
<dbReference type="GO" id="GO:0009507">
    <property type="term" value="C:chloroplast"/>
    <property type="evidence" value="ECO:0007669"/>
    <property type="project" value="UniProtKB-SubCell"/>
</dbReference>
<dbReference type="GO" id="GO:1990904">
    <property type="term" value="C:ribonucleoprotein complex"/>
    <property type="evidence" value="ECO:0007669"/>
    <property type="project" value="UniProtKB-KW"/>
</dbReference>
<dbReference type="GO" id="GO:0005840">
    <property type="term" value="C:ribosome"/>
    <property type="evidence" value="ECO:0007669"/>
    <property type="project" value="UniProtKB-KW"/>
</dbReference>
<dbReference type="GO" id="GO:0019843">
    <property type="term" value="F:rRNA binding"/>
    <property type="evidence" value="ECO:0007669"/>
    <property type="project" value="UniProtKB-UniRule"/>
</dbReference>
<dbReference type="GO" id="GO:0003735">
    <property type="term" value="F:structural constituent of ribosome"/>
    <property type="evidence" value="ECO:0007669"/>
    <property type="project" value="InterPro"/>
</dbReference>
<dbReference type="GO" id="GO:0006412">
    <property type="term" value="P:translation"/>
    <property type="evidence" value="ECO:0007669"/>
    <property type="project" value="UniProtKB-UniRule"/>
</dbReference>
<dbReference type="FunFam" id="3.30.1490.10:FF:000001">
    <property type="entry name" value="30S ribosomal protein S8"/>
    <property type="match status" value="1"/>
</dbReference>
<dbReference type="FunFam" id="3.30.1370.30:FF:000004">
    <property type="entry name" value="30S ribosomal protein S8, chloroplastic"/>
    <property type="match status" value="1"/>
</dbReference>
<dbReference type="Gene3D" id="3.30.1370.30">
    <property type="match status" value="1"/>
</dbReference>
<dbReference type="Gene3D" id="3.30.1490.10">
    <property type="match status" value="1"/>
</dbReference>
<dbReference type="HAMAP" id="MF_01302_B">
    <property type="entry name" value="Ribosomal_uS8_B"/>
    <property type="match status" value="1"/>
</dbReference>
<dbReference type="InterPro" id="IPR000630">
    <property type="entry name" value="Ribosomal_uS8"/>
</dbReference>
<dbReference type="InterPro" id="IPR047863">
    <property type="entry name" value="Ribosomal_uS8_CS"/>
</dbReference>
<dbReference type="InterPro" id="IPR035987">
    <property type="entry name" value="Ribosomal_uS8_sf"/>
</dbReference>
<dbReference type="NCBIfam" id="NF001109">
    <property type="entry name" value="PRK00136.1"/>
    <property type="match status" value="1"/>
</dbReference>
<dbReference type="PANTHER" id="PTHR11758">
    <property type="entry name" value="40S RIBOSOMAL PROTEIN S15A"/>
    <property type="match status" value="1"/>
</dbReference>
<dbReference type="Pfam" id="PF00410">
    <property type="entry name" value="Ribosomal_S8"/>
    <property type="match status" value="1"/>
</dbReference>
<dbReference type="SUPFAM" id="SSF56047">
    <property type="entry name" value="Ribosomal protein S8"/>
    <property type="match status" value="1"/>
</dbReference>
<dbReference type="PROSITE" id="PS00053">
    <property type="entry name" value="RIBOSOMAL_S8"/>
    <property type="match status" value="1"/>
</dbReference>
<organism>
    <name type="scientific">Olimarabidopsis pumila</name>
    <name type="common">Dwarf rocket</name>
    <name type="synonym">Arabidopsis griffithiana</name>
    <dbReference type="NCBI Taxonomy" id="74718"/>
    <lineage>
        <taxon>Eukaryota</taxon>
        <taxon>Viridiplantae</taxon>
        <taxon>Streptophyta</taxon>
        <taxon>Embryophyta</taxon>
        <taxon>Tracheophyta</taxon>
        <taxon>Spermatophyta</taxon>
        <taxon>Magnoliopsida</taxon>
        <taxon>eudicotyledons</taxon>
        <taxon>Gunneridae</taxon>
        <taxon>Pentapetalae</taxon>
        <taxon>rosids</taxon>
        <taxon>malvids</taxon>
        <taxon>Brassicales</taxon>
        <taxon>Brassicaceae</taxon>
        <taxon>Alyssopsideae</taxon>
        <taxon>Olimarabidopsis</taxon>
    </lineage>
</organism>
<protein>
    <recommendedName>
        <fullName evidence="2">Small ribosomal subunit protein uS8c</fullName>
    </recommendedName>
    <alternativeName>
        <fullName>30S ribosomal protein S8, chloroplastic</fullName>
    </alternativeName>
</protein>